<reference key="1">
    <citation type="submission" date="2006-09" db="EMBL/GenBank/DDBJ databases">
        <title>Complete sequence of chromosome 1 of Shewanella sp. ANA-3.</title>
        <authorList>
            <person name="Copeland A."/>
            <person name="Lucas S."/>
            <person name="Lapidus A."/>
            <person name="Barry K."/>
            <person name="Detter J.C."/>
            <person name="Glavina del Rio T."/>
            <person name="Hammon N."/>
            <person name="Israni S."/>
            <person name="Dalin E."/>
            <person name="Tice H."/>
            <person name="Pitluck S."/>
            <person name="Chertkov O."/>
            <person name="Brettin T."/>
            <person name="Bruce D."/>
            <person name="Han C."/>
            <person name="Tapia R."/>
            <person name="Gilna P."/>
            <person name="Schmutz J."/>
            <person name="Larimer F."/>
            <person name="Land M."/>
            <person name="Hauser L."/>
            <person name="Kyrpides N."/>
            <person name="Kim E."/>
            <person name="Newman D."/>
            <person name="Salticov C."/>
            <person name="Konstantinidis K."/>
            <person name="Klappenback J."/>
            <person name="Tiedje J."/>
            <person name="Richardson P."/>
        </authorList>
    </citation>
    <scope>NUCLEOTIDE SEQUENCE [LARGE SCALE GENOMIC DNA]</scope>
    <source>
        <strain>ANA-3</strain>
    </source>
</reference>
<sequence length="283" mass="30458">MAISAAQVKELRERTGAGMMDCKKALEETNGDMELAIDNMRKSGAAKAAKKAGNIAADGTILIKNGEGFAVLLEVNCQTDFVAKDANFLGFANAVLDVAAASKVSLEDLKAQFEEARVALVAKIGENINVRRVEYIDGTQLASYRHGERIGVVVTGEADEETLKHLAMHVAASKPEYVNPEDVPADVVAREQALQIEISMNEGKPAEIAEKMVVGRMKKFTGEISLTGQAYIMEPKKTVGEFLKEKGAKVTNFIRLEVGEGIEKKEEDFAAEVAAQIAASKKA</sequence>
<evidence type="ECO:0000255" key="1">
    <source>
        <dbReference type="HAMAP-Rule" id="MF_00050"/>
    </source>
</evidence>
<name>EFTS_SHESA</name>
<proteinExistence type="inferred from homology"/>
<accession>A0KZ22</accession>
<keyword id="KW-0963">Cytoplasm</keyword>
<keyword id="KW-0251">Elongation factor</keyword>
<keyword id="KW-0648">Protein biosynthesis</keyword>
<organism>
    <name type="scientific">Shewanella sp. (strain ANA-3)</name>
    <dbReference type="NCBI Taxonomy" id="94122"/>
    <lineage>
        <taxon>Bacteria</taxon>
        <taxon>Pseudomonadati</taxon>
        <taxon>Pseudomonadota</taxon>
        <taxon>Gammaproteobacteria</taxon>
        <taxon>Alteromonadales</taxon>
        <taxon>Shewanellaceae</taxon>
        <taxon>Shewanella</taxon>
    </lineage>
</organism>
<protein>
    <recommendedName>
        <fullName evidence="1">Elongation factor Ts</fullName>
        <shortName evidence="1">EF-Ts</shortName>
    </recommendedName>
</protein>
<gene>
    <name evidence="1" type="primary">tsf</name>
    <name type="ordered locus">Shewana3_2814</name>
</gene>
<comment type="function">
    <text evidence="1">Associates with the EF-Tu.GDP complex and induces the exchange of GDP to GTP. It remains bound to the aminoacyl-tRNA.EF-Tu.GTP complex up to the GTP hydrolysis stage on the ribosome.</text>
</comment>
<comment type="subcellular location">
    <subcellularLocation>
        <location evidence="1">Cytoplasm</location>
    </subcellularLocation>
</comment>
<comment type="similarity">
    <text evidence="1">Belongs to the EF-Ts family.</text>
</comment>
<dbReference type="EMBL" id="CP000469">
    <property type="protein sequence ID" value="ABK49041.1"/>
    <property type="molecule type" value="Genomic_DNA"/>
</dbReference>
<dbReference type="RefSeq" id="WP_011623392.1">
    <property type="nucleotide sequence ID" value="NC_008577.1"/>
</dbReference>
<dbReference type="SMR" id="A0KZ22"/>
<dbReference type="STRING" id="94122.Shewana3_2814"/>
<dbReference type="GeneID" id="94728752"/>
<dbReference type="KEGG" id="shn:Shewana3_2814"/>
<dbReference type="eggNOG" id="COG0264">
    <property type="taxonomic scope" value="Bacteria"/>
</dbReference>
<dbReference type="HOGENOM" id="CLU_047155_0_2_6"/>
<dbReference type="OrthoDB" id="9808348at2"/>
<dbReference type="Proteomes" id="UP000002589">
    <property type="component" value="Chromosome"/>
</dbReference>
<dbReference type="GO" id="GO:0005737">
    <property type="term" value="C:cytoplasm"/>
    <property type="evidence" value="ECO:0007669"/>
    <property type="project" value="UniProtKB-SubCell"/>
</dbReference>
<dbReference type="GO" id="GO:0003746">
    <property type="term" value="F:translation elongation factor activity"/>
    <property type="evidence" value="ECO:0007669"/>
    <property type="project" value="UniProtKB-UniRule"/>
</dbReference>
<dbReference type="CDD" id="cd14275">
    <property type="entry name" value="UBA_EF-Ts"/>
    <property type="match status" value="1"/>
</dbReference>
<dbReference type="FunFam" id="1.10.286.20:FF:000001">
    <property type="entry name" value="Elongation factor Ts"/>
    <property type="match status" value="1"/>
</dbReference>
<dbReference type="FunFam" id="1.10.8.10:FF:000001">
    <property type="entry name" value="Elongation factor Ts"/>
    <property type="match status" value="1"/>
</dbReference>
<dbReference type="FunFam" id="3.30.479.20:FF:000001">
    <property type="entry name" value="Elongation factor Ts"/>
    <property type="match status" value="1"/>
</dbReference>
<dbReference type="Gene3D" id="1.10.286.20">
    <property type="match status" value="1"/>
</dbReference>
<dbReference type="Gene3D" id="1.10.8.10">
    <property type="entry name" value="DNA helicase RuvA subunit, C-terminal domain"/>
    <property type="match status" value="1"/>
</dbReference>
<dbReference type="Gene3D" id="3.30.479.20">
    <property type="entry name" value="Elongation factor Ts, dimerisation domain"/>
    <property type="match status" value="2"/>
</dbReference>
<dbReference type="HAMAP" id="MF_00050">
    <property type="entry name" value="EF_Ts"/>
    <property type="match status" value="1"/>
</dbReference>
<dbReference type="InterPro" id="IPR036402">
    <property type="entry name" value="EF-Ts_dimer_sf"/>
</dbReference>
<dbReference type="InterPro" id="IPR001816">
    <property type="entry name" value="Transl_elong_EFTs/EF1B"/>
</dbReference>
<dbReference type="InterPro" id="IPR014039">
    <property type="entry name" value="Transl_elong_EFTs/EF1B_dimer"/>
</dbReference>
<dbReference type="InterPro" id="IPR018101">
    <property type="entry name" value="Transl_elong_Ts_CS"/>
</dbReference>
<dbReference type="InterPro" id="IPR009060">
    <property type="entry name" value="UBA-like_sf"/>
</dbReference>
<dbReference type="NCBIfam" id="TIGR00116">
    <property type="entry name" value="tsf"/>
    <property type="match status" value="1"/>
</dbReference>
<dbReference type="PANTHER" id="PTHR11741">
    <property type="entry name" value="ELONGATION FACTOR TS"/>
    <property type="match status" value="1"/>
</dbReference>
<dbReference type="PANTHER" id="PTHR11741:SF0">
    <property type="entry name" value="ELONGATION FACTOR TS, MITOCHONDRIAL"/>
    <property type="match status" value="1"/>
</dbReference>
<dbReference type="Pfam" id="PF00889">
    <property type="entry name" value="EF_TS"/>
    <property type="match status" value="1"/>
</dbReference>
<dbReference type="SUPFAM" id="SSF54713">
    <property type="entry name" value="Elongation factor Ts (EF-Ts), dimerisation domain"/>
    <property type="match status" value="2"/>
</dbReference>
<dbReference type="SUPFAM" id="SSF46934">
    <property type="entry name" value="UBA-like"/>
    <property type="match status" value="1"/>
</dbReference>
<dbReference type="PROSITE" id="PS01126">
    <property type="entry name" value="EF_TS_1"/>
    <property type="match status" value="1"/>
</dbReference>
<dbReference type="PROSITE" id="PS01127">
    <property type="entry name" value="EF_TS_2"/>
    <property type="match status" value="1"/>
</dbReference>
<feature type="chain" id="PRO_1000006179" description="Elongation factor Ts">
    <location>
        <begin position="1"/>
        <end position="283"/>
    </location>
</feature>
<feature type="region of interest" description="Involved in Mg(2+) ion dislocation from EF-Tu" evidence="1">
    <location>
        <begin position="79"/>
        <end position="82"/>
    </location>
</feature>